<sequence length="376" mass="43365">MGLLAFLKTQFVLHPLVGFVFVVSGLVINFVQLCTLALWPVSKQLYRRLNCRLAYSLWSQLVMLLEWWSCTECTLFTDQATVERFGKEHAVIILNHNFEIDFLCGWTMCERFGVLGSSKVLAKKELLYVPLIGWTWYFLEIVFCKRKWEEDRDTVVEGLRRLSDYPEYMWFLLYCEGTRFTETKHRVSMEVAAAKGLPVLKYHLLPRTKGFTTAVKCLRGTVAAVYDVTLNFRGNKNPSLLGILYGKKYEADMCVRRFPLEDIPLDEKEAAQWLHKLYQEKDALQEIYNQKGMFPGEQFKPARRPWTLLNFLSWATILLSPLFSFVLGVFASGSPLLILTFLGFVGAASFGVRRLIGVTEIEKGSSYGNQEFKKKE</sequence>
<gene>
    <name type="primary">AGPAT3</name>
</gene>
<accession>Q5RA57</accession>
<feature type="chain" id="PRO_0000208196" description="1-acyl-sn-glycerol-3-phosphate acyltransferase gamma">
    <location>
        <begin position="1"/>
        <end position="376"/>
    </location>
</feature>
<feature type="topological domain" description="Cytoplasmic" evidence="2">
    <location>
        <begin position="1"/>
        <end position="124"/>
    </location>
</feature>
<feature type="transmembrane region" description="Helical" evidence="3">
    <location>
        <begin position="125"/>
        <end position="145"/>
    </location>
</feature>
<feature type="topological domain" description="Lumenal" evidence="2">
    <location>
        <begin position="146"/>
        <end position="316"/>
    </location>
</feature>
<feature type="transmembrane region" description="Helical" evidence="3">
    <location>
        <begin position="317"/>
        <end position="339"/>
    </location>
</feature>
<feature type="topological domain" description="Cytoplasmic" evidence="2">
    <location>
        <begin position="340"/>
        <end position="376"/>
    </location>
</feature>
<feature type="short sequence motif" description="HXXXXD motif" evidence="1">
    <location>
        <begin position="96"/>
        <end position="101"/>
    </location>
</feature>
<organism>
    <name type="scientific">Pongo abelii</name>
    <name type="common">Sumatran orangutan</name>
    <name type="synonym">Pongo pygmaeus abelii</name>
    <dbReference type="NCBI Taxonomy" id="9601"/>
    <lineage>
        <taxon>Eukaryota</taxon>
        <taxon>Metazoa</taxon>
        <taxon>Chordata</taxon>
        <taxon>Craniata</taxon>
        <taxon>Vertebrata</taxon>
        <taxon>Euteleostomi</taxon>
        <taxon>Mammalia</taxon>
        <taxon>Eutheria</taxon>
        <taxon>Euarchontoglires</taxon>
        <taxon>Primates</taxon>
        <taxon>Haplorrhini</taxon>
        <taxon>Catarrhini</taxon>
        <taxon>Hominidae</taxon>
        <taxon>Pongo</taxon>
    </lineage>
</organism>
<reference key="1">
    <citation type="submission" date="2004-11" db="EMBL/GenBank/DDBJ databases">
        <authorList>
            <consortium name="The German cDNA consortium"/>
        </authorList>
    </citation>
    <scope>NUCLEOTIDE SEQUENCE [LARGE SCALE MRNA]</scope>
    <source>
        <tissue>Kidney</tissue>
    </source>
</reference>
<comment type="function">
    <text evidence="1 2">Converts 1-acyl-sn-glycerol-3-phosphate (lysophosphatidic acid or LPA) into 1,2-diacyl-sn-glycerol-3-phosphate (phosphatidic acid or PA) by incorporating an acyl moiety at the sn-2 position of the glycerol backbone (By similarity). Acts on LPA containing saturated or unsaturated fatty acids C16:0-C20:4 at the sn-1 position using C18:1, C20:4 or C18:2-CoA as the acyl donor (By similarity). Also acts on lysophosphatidylcholine, lysophosphatidylinositol and lysophosphatidylserine using C18:1 or C20:4-CoA. Has a preference for arachidonoyl-CoA as a donor (By similarity). Also has a modest lysophosphatidylinositol acyltransferase (LPIAT) activity, converts lysophosphatidylinositol (LPI) into phosphatidylinositol (By similarity).</text>
</comment>
<comment type="catalytic activity">
    <reaction evidence="2">
        <text>a 1-acyl-sn-glycero-3-phosphate + an acyl-CoA = a 1,2-diacyl-sn-glycero-3-phosphate + CoA</text>
        <dbReference type="Rhea" id="RHEA:19709"/>
        <dbReference type="ChEBI" id="CHEBI:57287"/>
        <dbReference type="ChEBI" id="CHEBI:57970"/>
        <dbReference type="ChEBI" id="CHEBI:58342"/>
        <dbReference type="ChEBI" id="CHEBI:58608"/>
        <dbReference type="EC" id="2.3.1.51"/>
    </reaction>
    <physiologicalReaction direction="left-to-right" evidence="2">
        <dbReference type="Rhea" id="RHEA:19710"/>
    </physiologicalReaction>
</comment>
<comment type="catalytic activity">
    <reaction evidence="2">
        <text>pentadecanoyl-CoA + 1-(9Z-octadecenoyl)-sn-glycero-3-phosphate = 1-(9Z)-octadecenoyl-2-pentadecanoyl-sn-glycero-3-phosphate + CoA</text>
        <dbReference type="Rhea" id="RHEA:37175"/>
        <dbReference type="ChEBI" id="CHEBI:57287"/>
        <dbReference type="ChEBI" id="CHEBI:74309"/>
        <dbReference type="ChEBI" id="CHEBI:74544"/>
        <dbReference type="ChEBI" id="CHEBI:74578"/>
    </reaction>
    <physiologicalReaction direction="left-to-right" evidence="2">
        <dbReference type="Rhea" id="RHEA:37176"/>
    </physiologicalReaction>
</comment>
<comment type="catalytic activity">
    <reaction evidence="2">
        <text>heptadecanoyl-CoA + 1-(9Z-octadecenoyl)-sn-glycero-3-phosphate = 1-(9Z)-octadecenoyl-2-heptadecanoyl-sn-glycero-3-phosphate + CoA</text>
        <dbReference type="Rhea" id="RHEA:37155"/>
        <dbReference type="ChEBI" id="CHEBI:57287"/>
        <dbReference type="ChEBI" id="CHEBI:74307"/>
        <dbReference type="ChEBI" id="CHEBI:74544"/>
        <dbReference type="ChEBI" id="CHEBI:74558"/>
    </reaction>
    <physiologicalReaction direction="left-to-right" evidence="2">
        <dbReference type="Rhea" id="RHEA:37156"/>
    </physiologicalReaction>
</comment>
<comment type="catalytic activity">
    <reaction evidence="2">
        <text>1-(9Z-octadecenoyl)-sn-glycero-3-phosphate + octadecanoyl-CoA = 1-(9Z-octadecenoyl)-2-octadecanoyl-sn-glycero-3-phosphate + CoA</text>
        <dbReference type="Rhea" id="RHEA:37147"/>
        <dbReference type="ChEBI" id="CHEBI:57287"/>
        <dbReference type="ChEBI" id="CHEBI:57394"/>
        <dbReference type="ChEBI" id="CHEBI:74544"/>
        <dbReference type="ChEBI" id="CHEBI:74552"/>
    </reaction>
    <physiologicalReaction direction="left-to-right" evidence="2">
        <dbReference type="Rhea" id="RHEA:37148"/>
    </physiologicalReaction>
</comment>
<comment type="catalytic activity">
    <reaction evidence="2">
        <text>nonadecanoyl-CoA + 1-(9Z-octadecenoyl)-sn-glycero-3-phosphate = 1-(9Z)-octadecenoyl-2-nonadecanoyl-sn-glycero-3-phosphate + CoA</text>
        <dbReference type="Rhea" id="RHEA:37595"/>
        <dbReference type="ChEBI" id="CHEBI:57287"/>
        <dbReference type="ChEBI" id="CHEBI:74544"/>
        <dbReference type="ChEBI" id="CHEBI:75104"/>
        <dbReference type="ChEBI" id="CHEBI:75105"/>
    </reaction>
    <physiologicalReaction direction="left-to-right" evidence="2">
        <dbReference type="Rhea" id="RHEA:37596"/>
    </physiologicalReaction>
</comment>
<comment type="catalytic activity">
    <reaction evidence="2">
        <text>1-(9Z-octadecenoyl)-sn-glycero-3-phosphate + (5Z,8Z,11Z,14Z)-eicosatetraenoyl-CoA = 1-(9Z)-octadecenoyl-2-(5Z,8Z,11Z,14Z)-eicosatetraenoyl-sn-glycero-3-phosphate + CoA</text>
        <dbReference type="Rhea" id="RHEA:37443"/>
        <dbReference type="ChEBI" id="CHEBI:57287"/>
        <dbReference type="ChEBI" id="CHEBI:57368"/>
        <dbReference type="ChEBI" id="CHEBI:74544"/>
        <dbReference type="ChEBI" id="CHEBI:74928"/>
    </reaction>
    <physiologicalReaction direction="left-to-right" evidence="2">
        <dbReference type="Rhea" id="RHEA:37444"/>
    </physiologicalReaction>
</comment>
<comment type="catalytic activity">
    <reaction evidence="2">
        <text>1-(9Z-octadecenoyl)-sn-glycero-3-phosphate + (9Z)-octadecenoyl-CoA = 1,2-di-(9Z-octadecenoyl)-sn-glycero-3-phosphate + CoA</text>
        <dbReference type="Rhea" id="RHEA:37131"/>
        <dbReference type="ChEBI" id="CHEBI:57287"/>
        <dbReference type="ChEBI" id="CHEBI:57387"/>
        <dbReference type="ChEBI" id="CHEBI:74544"/>
        <dbReference type="ChEBI" id="CHEBI:74546"/>
    </reaction>
    <physiologicalReaction direction="left-to-right" evidence="2">
        <dbReference type="Rhea" id="RHEA:37132"/>
    </physiologicalReaction>
</comment>
<comment type="catalytic activity">
    <reaction evidence="2">
        <text>1-(9Z-octadecenoyl)-sn-glycero-3-phosphate + (9Z,12Z)-octadecadienoyl-CoA = 1-(9Z)-octadecenoyl-2-(9Z,12Z)-octadecadienoyl-sn-glycero-3-phosphate + CoA</text>
        <dbReference type="Rhea" id="RHEA:37159"/>
        <dbReference type="ChEBI" id="CHEBI:57287"/>
        <dbReference type="ChEBI" id="CHEBI:57383"/>
        <dbReference type="ChEBI" id="CHEBI:74544"/>
        <dbReference type="ChEBI" id="CHEBI:74563"/>
    </reaction>
    <physiologicalReaction direction="left-to-right" evidence="2">
        <dbReference type="Rhea" id="RHEA:37160"/>
    </physiologicalReaction>
</comment>
<comment type="catalytic activity">
    <reaction evidence="2">
        <text>1-(9Z-octadecenoyl)-sn-glycero-3-phosphocholine + (5Z,8Z,11Z,14Z)-eicosatetraenoyl-CoA = 1-(9Z)-octadecenoyl-2-(5Z,8Z,11Z,14Z)-icosatetraenoyl-sn-glycero-3-phosphocholine + CoA</text>
        <dbReference type="Rhea" id="RHEA:37395"/>
        <dbReference type="ChEBI" id="CHEBI:28610"/>
        <dbReference type="ChEBI" id="CHEBI:57287"/>
        <dbReference type="ChEBI" id="CHEBI:57368"/>
        <dbReference type="ChEBI" id="CHEBI:74671"/>
    </reaction>
    <physiologicalReaction direction="left-to-right" evidence="2">
        <dbReference type="Rhea" id="RHEA:37396"/>
    </physiologicalReaction>
</comment>
<comment type="catalytic activity">
    <reaction evidence="2">
        <text>1-(9Z-octadecenoyl)-sn-glycero-3-phospho-(1D-myo-inositol) + (5Z,8Z,11Z,14Z)-eicosatetraenoyl-CoA = 1-(9Z-octadecenoyl)-2-(5Z,8Z,11Z,14Z-eicosatetraenoyl)-sn-glycero-3-phospho-1D-myo-inositol + CoA</text>
        <dbReference type="Rhea" id="RHEA:42216"/>
        <dbReference type="ChEBI" id="CHEBI:57287"/>
        <dbReference type="ChEBI" id="CHEBI:57368"/>
        <dbReference type="ChEBI" id="CHEBI:78762"/>
        <dbReference type="ChEBI" id="CHEBI:78765"/>
    </reaction>
    <physiologicalReaction direction="left-to-right" evidence="2">
        <dbReference type="Rhea" id="RHEA:42217"/>
    </physiologicalReaction>
</comment>
<comment type="catalytic activity">
    <reaction evidence="2">
        <text>1-(9Z-octadecenoyl)-sn-glycero-3-phospho-L-serine + (5Z,8Z,11Z,14Z)-eicosatetraenoyl-CoA = 1-(9Z-octadecenoyl)-2-(5Z,8Z,11Z,14Z-eicosatetraenoyl)-sn-glycero-3-phospho-L-serine + CoA</text>
        <dbReference type="Rhea" id="RHEA:37379"/>
        <dbReference type="ChEBI" id="CHEBI:57287"/>
        <dbReference type="ChEBI" id="CHEBI:57368"/>
        <dbReference type="ChEBI" id="CHEBI:74617"/>
        <dbReference type="ChEBI" id="CHEBI:74897"/>
    </reaction>
    <physiologicalReaction direction="left-to-right" evidence="2">
        <dbReference type="Rhea" id="RHEA:37380"/>
    </physiologicalReaction>
</comment>
<comment type="catalytic activity">
    <reaction evidence="2">
        <text>1-hexadecanoyl-sn-glycero-3-phosphate + (9Z)-octadecenoyl-CoA = 1-hexadecanoyl-2-(9Z-octadecenoyl)-sn-glycero-3-phosphate + CoA</text>
        <dbReference type="Rhea" id="RHEA:33187"/>
        <dbReference type="ChEBI" id="CHEBI:57287"/>
        <dbReference type="ChEBI" id="CHEBI:57387"/>
        <dbReference type="ChEBI" id="CHEBI:57518"/>
        <dbReference type="ChEBI" id="CHEBI:64839"/>
    </reaction>
    <physiologicalReaction direction="left-to-right" evidence="2">
        <dbReference type="Rhea" id="RHEA:33188"/>
    </physiologicalReaction>
</comment>
<comment type="catalytic activity">
    <reaction evidence="2">
        <text>1-hexadecanoyl-sn-glycero-3-phosphate + (5Z,8Z,11Z,14Z)-eicosatetraenoyl-CoA = 1-hexadecanoyl-2-(5Z,8Z,11Z,14Z-eicosatetraenoyl)-sn-glycero-3-phosphate + CoA</text>
        <dbReference type="Rhea" id="RHEA:35915"/>
        <dbReference type="ChEBI" id="CHEBI:57287"/>
        <dbReference type="ChEBI" id="CHEBI:57368"/>
        <dbReference type="ChEBI" id="CHEBI:57518"/>
        <dbReference type="ChEBI" id="CHEBI:72864"/>
    </reaction>
    <physiologicalReaction direction="left-to-right" evidence="2">
        <dbReference type="Rhea" id="RHEA:35916"/>
    </physiologicalReaction>
</comment>
<comment type="catalytic activity">
    <reaction evidence="2">
        <text>1-heptadecanoyl-sn-glycero-3-phosphate + (5Z,8Z,11Z,14Z)-eicosatetraenoyl-CoA = 1-heptadecanoyl-2-(5Z,8Z,11Z,14Z)-eicosatetraenoyl-sn-glycero-3-phosphate + CoA</text>
        <dbReference type="Rhea" id="RHEA:42220"/>
        <dbReference type="ChEBI" id="CHEBI:57287"/>
        <dbReference type="ChEBI" id="CHEBI:57368"/>
        <dbReference type="ChEBI" id="CHEBI:74554"/>
        <dbReference type="ChEBI" id="CHEBI:78768"/>
    </reaction>
    <physiologicalReaction direction="left-to-right" evidence="2">
        <dbReference type="Rhea" id="RHEA:42221"/>
    </physiologicalReaction>
</comment>
<comment type="catalytic activity">
    <reaction evidence="2">
        <text>1-octadecanoyl-sn-glycero-3-phosphate + (9Z)-octadecenoyl-CoA = 1-octadecanoyl-2-(9Z-octadecenoyl)-sn-glycero-3-phosphate + CoA</text>
        <dbReference type="Rhea" id="RHEA:37163"/>
        <dbReference type="ChEBI" id="CHEBI:57287"/>
        <dbReference type="ChEBI" id="CHEBI:57387"/>
        <dbReference type="ChEBI" id="CHEBI:74560"/>
        <dbReference type="ChEBI" id="CHEBI:74565"/>
    </reaction>
    <physiologicalReaction direction="left-to-right" evidence="2">
        <dbReference type="Rhea" id="RHEA:37164"/>
    </physiologicalReaction>
</comment>
<comment type="catalytic activity">
    <reaction evidence="2">
        <text>1-octadecanoyl-sn-glycero-3-phosphate + (5Z,8Z,11Z,14Z)-eicosatetraenoyl-CoA = 1-octadecanoyl-2-(5Z,8Z,11Z,14Z-eicosatetraenoyl)-sn-glycero-3-phosphate + CoA</text>
        <dbReference type="Rhea" id="RHEA:42588"/>
        <dbReference type="ChEBI" id="CHEBI:57287"/>
        <dbReference type="ChEBI" id="CHEBI:57368"/>
        <dbReference type="ChEBI" id="CHEBI:74565"/>
        <dbReference type="ChEBI" id="CHEBI:77091"/>
    </reaction>
    <physiologicalReaction direction="left-to-right" evidence="2">
        <dbReference type="Rhea" id="RHEA:42589"/>
    </physiologicalReaction>
</comment>
<comment type="catalytic activity">
    <reaction evidence="2">
        <text>1-(9Z-octadecenoyl)-sn-glycero-3-phosphate + hexadecanoyl-CoA = 1-hexadecanoyl-2-(9Z-octadecenoyl)-sn-glycero-3-phosphate + CoA</text>
        <dbReference type="Rhea" id="RHEA:42592"/>
        <dbReference type="ChEBI" id="CHEBI:57287"/>
        <dbReference type="ChEBI" id="CHEBI:57379"/>
        <dbReference type="ChEBI" id="CHEBI:64839"/>
        <dbReference type="ChEBI" id="CHEBI:74544"/>
    </reaction>
    <physiologicalReaction direction="left-to-right" evidence="2">
        <dbReference type="Rhea" id="RHEA:42593"/>
    </physiologicalReaction>
</comment>
<comment type="catalytic activity">
    <reaction evidence="1">
        <text>1-O-(9Z-octadecenyl)-sn-glycero-3-phosphate + (5Z,8Z,11Z,14Z)-eicosatetraenoyl-CoA = 1-O-(9Z-octadecenyl)-2-(5Z,8Z,11Z,14Z-eicosatetraenoyl)-sn-glycero-3-phosphate + CoA</text>
        <dbReference type="Rhea" id="RHEA:45404"/>
        <dbReference type="ChEBI" id="CHEBI:57287"/>
        <dbReference type="ChEBI" id="CHEBI:57368"/>
        <dbReference type="ChEBI" id="CHEBI:78402"/>
        <dbReference type="ChEBI" id="CHEBI:85231"/>
    </reaction>
    <physiologicalReaction direction="left-to-right" evidence="1">
        <dbReference type="Rhea" id="RHEA:45405"/>
    </physiologicalReaction>
</comment>
<comment type="catalytic activity">
    <reaction evidence="1">
        <text>a 1-acyl-sn-glycero-3-phospho-(1D-myo-inositol) + (5Z,8Z,11Z,14Z)-eicosatetraenoyl-CoA = a 1-acyl-2-(5Z,8Z,11Z,14Z-eicosatetraenoyl)-sn-glycero-3-phospho-(1D-myo-inositol) + CoA</text>
        <dbReference type="Rhea" id="RHEA:37015"/>
        <dbReference type="ChEBI" id="CHEBI:57287"/>
        <dbReference type="ChEBI" id="CHEBI:57368"/>
        <dbReference type="ChEBI" id="CHEBI:64771"/>
        <dbReference type="ChEBI" id="CHEBI:75243"/>
    </reaction>
    <physiologicalReaction direction="left-to-right" evidence="1">
        <dbReference type="Rhea" id="RHEA:37016"/>
    </physiologicalReaction>
</comment>
<comment type="pathway">
    <text>Phospholipid metabolism; CDP-diacylglycerol biosynthesis; CDP-diacylglycerol from sn-glycerol 3-phosphate: step 2/3.</text>
</comment>
<comment type="subcellular location">
    <subcellularLocation>
        <location evidence="2">Endoplasmic reticulum membrane</location>
        <topology evidence="3">Multi-pass membrane protein</topology>
    </subcellularLocation>
    <subcellularLocation>
        <location evidence="2">Nucleus envelope</location>
    </subcellularLocation>
</comment>
<comment type="domain">
    <text evidence="1">The HXXXXD motif is essential for acyltransferase activity and may constitute the binding site for the phosphate moiety of the glycerol-3-phosphate.</text>
</comment>
<comment type="similarity">
    <text evidence="4">Belongs to the 1-acyl-sn-glycerol-3-phosphate acyltransferase family.</text>
</comment>
<protein>
    <recommendedName>
        <fullName>1-acyl-sn-glycerol-3-phosphate acyltransferase gamma</fullName>
        <ecNumber evidence="2">2.3.1.51</ecNumber>
    </recommendedName>
    <alternativeName>
        <fullName>1-acylglycerol-3-phosphate O-acyltransferase 3</fullName>
        <shortName>1-AGP acyltransferase 3</shortName>
        <shortName>1-AGPAT 3</shortName>
    </alternativeName>
    <alternativeName>
        <fullName>Lysophosphatidic acid acyltransferase gamma</fullName>
        <shortName>LPAAT-gamma</shortName>
    </alternativeName>
</protein>
<dbReference type="EC" id="2.3.1.51" evidence="2"/>
<dbReference type="EMBL" id="CR859164">
    <property type="protein sequence ID" value="CAH91353.1"/>
    <property type="molecule type" value="mRNA"/>
</dbReference>
<dbReference type="RefSeq" id="NP_001127407.1">
    <property type="nucleotide sequence ID" value="NM_001133935.1"/>
</dbReference>
<dbReference type="STRING" id="9601.ENSPPYP00000012813"/>
<dbReference type="GeneID" id="100174477"/>
<dbReference type="KEGG" id="pon:100174477"/>
<dbReference type="CTD" id="56894"/>
<dbReference type="eggNOG" id="KOG1505">
    <property type="taxonomic scope" value="Eukaryota"/>
</dbReference>
<dbReference type="InParanoid" id="Q5RA57"/>
<dbReference type="OrthoDB" id="189226at2759"/>
<dbReference type="UniPathway" id="UPA00557">
    <property type="reaction ID" value="UER00613"/>
</dbReference>
<dbReference type="Proteomes" id="UP000001595">
    <property type="component" value="Unplaced"/>
</dbReference>
<dbReference type="GO" id="GO:0005789">
    <property type="term" value="C:endoplasmic reticulum membrane"/>
    <property type="evidence" value="ECO:0000250"/>
    <property type="project" value="UniProtKB"/>
</dbReference>
<dbReference type="GO" id="GO:0005635">
    <property type="term" value="C:nuclear envelope"/>
    <property type="evidence" value="ECO:0000250"/>
    <property type="project" value="UniProtKB"/>
</dbReference>
<dbReference type="GO" id="GO:0003841">
    <property type="term" value="F:1-acylglycerol-3-phosphate O-acyltransferase activity"/>
    <property type="evidence" value="ECO:0000250"/>
    <property type="project" value="UniProtKB"/>
</dbReference>
<dbReference type="GO" id="GO:0016024">
    <property type="term" value="P:CDP-diacylglycerol biosynthetic process"/>
    <property type="evidence" value="ECO:0007669"/>
    <property type="project" value="UniProtKB-UniPathway"/>
</dbReference>
<dbReference type="CDD" id="cd07990">
    <property type="entry name" value="LPLAT_LCLAT1-like"/>
    <property type="match status" value="1"/>
</dbReference>
<dbReference type="InterPro" id="IPR032098">
    <property type="entry name" value="Acyltransf_C"/>
</dbReference>
<dbReference type="InterPro" id="IPR002123">
    <property type="entry name" value="Plipid/glycerol_acylTrfase"/>
</dbReference>
<dbReference type="PANTHER" id="PTHR10983:SF9">
    <property type="entry name" value="1-ACYL-SN-GLYCEROL-3-PHOSPHATE ACYLTRANSFERASE GAMMA"/>
    <property type="match status" value="1"/>
</dbReference>
<dbReference type="PANTHER" id="PTHR10983">
    <property type="entry name" value="1-ACYLGLYCEROL-3-PHOSPHATE ACYLTRANSFERASE-RELATED"/>
    <property type="match status" value="1"/>
</dbReference>
<dbReference type="Pfam" id="PF16076">
    <property type="entry name" value="Acyltransf_C"/>
    <property type="match status" value="1"/>
</dbReference>
<dbReference type="Pfam" id="PF01553">
    <property type="entry name" value="Acyltransferase"/>
    <property type="match status" value="1"/>
</dbReference>
<dbReference type="SMART" id="SM00563">
    <property type="entry name" value="PlsC"/>
    <property type="match status" value="1"/>
</dbReference>
<dbReference type="SUPFAM" id="SSF69593">
    <property type="entry name" value="Glycerol-3-phosphate (1)-acyltransferase"/>
    <property type="match status" value="1"/>
</dbReference>
<keyword id="KW-0012">Acyltransferase</keyword>
<keyword id="KW-0256">Endoplasmic reticulum</keyword>
<keyword id="KW-0444">Lipid biosynthesis</keyword>
<keyword id="KW-0443">Lipid metabolism</keyword>
<keyword id="KW-0472">Membrane</keyword>
<keyword id="KW-0539">Nucleus</keyword>
<keyword id="KW-0594">Phospholipid biosynthesis</keyword>
<keyword id="KW-1208">Phospholipid metabolism</keyword>
<keyword id="KW-1185">Reference proteome</keyword>
<keyword id="KW-0808">Transferase</keyword>
<keyword id="KW-0812">Transmembrane</keyword>
<keyword id="KW-1133">Transmembrane helix</keyword>
<proteinExistence type="evidence at transcript level"/>
<name>PLCC_PONAB</name>
<evidence type="ECO:0000250" key="1">
    <source>
        <dbReference type="UniProtKB" id="Q9D517"/>
    </source>
</evidence>
<evidence type="ECO:0000250" key="2">
    <source>
        <dbReference type="UniProtKB" id="Q9NRZ7"/>
    </source>
</evidence>
<evidence type="ECO:0000255" key="3"/>
<evidence type="ECO:0000305" key="4"/>